<reference key="1">
    <citation type="journal article" date="2006" name="PLoS Genet.">
        <title>Comparative genomics of emerging human ehrlichiosis agents.</title>
        <authorList>
            <person name="Dunning Hotopp J.C."/>
            <person name="Lin M."/>
            <person name="Madupu R."/>
            <person name="Crabtree J."/>
            <person name="Angiuoli S.V."/>
            <person name="Eisen J.A."/>
            <person name="Seshadri R."/>
            <person name="Ren Q."/>
            <person name="Wu M."/>
            <person name="Utterback T.R."/>
            <person name="Smith S."/>
            <person name="Lewis M."/>
            <person name="Khouri H."/>
            <person name="Zhang C."/>
            <person name="Niu H."/>
            <person name="Lin Q."/>
            <person name="Ohashi N."/>
            <person name="Zhi N."/>
            <person name="Nelson W.C."/>
            <person name="Brinkac L.M."/>
            <person name="Dodson R.J."/>
            <person name="Rosovitz M.J."/>
            <person name="Sundaram J.P."/>
            <person name="Daugherty S.C."/>
            <person name="Davidsen T."/>
            <person name="Durkin A.S."/>
            <person name="Gwinn M.L."/>
            <person name="Haft D.H."/>
            <person name="Selengut J.D."/>
            <person name="Sullivan S.A."/>
            <person name="Zafar N."/>
            <person name="Zhou L."/>
            <person name="Benahmed F."/>
            <person name="Forberger H."/>
            <person name="Halpin R."/>
            <person name="Mulligan S."/>
            <person name="Robinson J."/>
            <person name="White O."/>
            <person name="Rikihisa Y."/>
            <person name="Tettelin H."/>
        </authorList>
    </citation>
    <scope>NUCLEOTIDE SEQUENCE [LARGE SCALE GENOMIC DNA]</scope>
    <source>
        <strain>HZ</strain>
    </source>
</reference>
<organism>
    <name type="scientific">Anaplasma phagocytophilum (strain HZ)</name>
    <dbReference type="NCBI Taxonomy" id="212042"/>
    <lineage>
        <taxon>Bacteria</taxon>
        <taxon>Pseudomonadati</taxon>
        <taxon>Pseudomonadota</taxon>
        <taxon>Alphaproteobacteria</taxon>
        <taxon>Rickettsiales</taxon>
        <taxon>Anaplasmataceae</taxon>
        <taxon>Anaplasma</taxon>
        <taxon>phagocytophilum group</taxon>
    </lineage>
</organism>
<protein>
    <recommendedName>
        <fullName evidence="1">Aspartyl/glutamyl-tRNA(Asn/Gln) amidotransferase subunit B</fullName>
        <shortName evidence="1">Asp/Glu-ADT subunit B</shortName>
        <ecNumber evidence="1">6.3.5.-</ecNumber>
    </recommendedName>
</protein>
<evidence type="ECO:0000255" key="1">
    <source>
        <dbReference type="HAMAP-Rule" id="MF_00121"/>
    </source>
</evidence>
<name>GATB_ANAPZ</name>
<sequence length="483" mass="53749">MSWIINGASHDWEVVIGLEVHAQIVSNSKLFSGASTEISVDPNSHVALLDVAMPGVLPVTNEYCIVQAVKTALALSCEVKKYSVFDRKNYFYPDLSFGYQITQFYHPIAKNGHIMLDESADNKKIGIARIHIEQDAGKSLHVGDKTCIDFNRAGVALMEIVTDPDLRSPEEAAEYLKKLRIILRYIGACSGDMENGALRCDANVSVRKVGESALGVRSEIKNLNSIKYVAQAIKYEAMRHVEVLESGGKVEQSTLLYDVDTGTTRTMRSKEDVCDYRYFPDPDLLPLEITDEFIASIRDTLPELPMAKMSRYMNDFSLSRYDAVILSSDRDVAEYYDEVMQRNLPGDLVAAWVTGELFGMLNKRGMCISDSPVRADALGDLLRLMVDGTISGKMAKQVFATMFETGKSASKIVEEEGLQQIADEGVLSAMVERVLEKNPDKVQQYKQGKEKLFGYFVGQIMQETKGRANPEVLNALIQSKLSQ</sequence>
<feature type="chain" id="PRO_0000241189" description="Aspartyl/glutamyl-tRNA(Asn/Gln) amidotransferase subunit B">
    <location>
        <begin position="1"/>
        <end position="483"/>
    </location>
</feature>
<gene>
    <name evidence="1" type="primary">gatB</name>
    <name type="ordered locus">APH_0470</name>
</gene>
<comment type="function">
    <text evidence="1">Allows the formation of correctly charged Asn-tRNA(Asn) or Gln-tRNA(Gln) through the transamidation of misacylated Asp-tRNA(Asn) or Glu-tRNA(Gln) in organisms which lack either or both of asparaginyl-tRNA or glutaminyl-tRNA synthetases. The reaction takes place in the presence of glutamine and ATP through an activated phospho-Asp-tRNA(Asn) or phospho-Glu-tRNA(Gln).</text>
</comment>
<comment type="catalytic activity">
    <reaction evidence="1">
        <text>L-glutamyl-tRNA(Gln) + L-glutamine + ATP + H2O = L-glutaminyl-tRNA(Gln) + L-glutamate + ADP + phosphate + H(+)</text>
        <dbReference type="Rhea" id="RHEA:17521"/>
        <dbReference type="Rhea" id="RHEA-COMP:9681"/>
        <dbReference type="Rhea" id="RHEA-COMP:9684"/>
        <dbReference type="ChEBI" id="CHEBI:15377"/>
        <dbReference type="ChEBI" id="CHEBI:15378"/>
        <dbReference type="ChEBI" id="CHEBI:29985"/>
        <dbReference type="ChEBI" id="CHEBI:30616"/>
        <dbReference type="ChEBI" id="CHEBI:43474"/>
        <dbReference type="ChEBI" id="CHEBI:58359"/>
        <dbReference type="ChEBI" id="CHEBI:78520"/>
        <dbReference type="ChEBI" id="CHEBI:78521"/>
        <dbReference type="ChEBI" id="CHEBI:456216"/>
    </reaction>
</comment>
<comment type="catalytic activity">
    <reaction evidence="1">
        <text>L-aspartyl-tRNA(Asn) + L-glutamine + ATP + H2O = L-asparaginyl-tRNA(Asn) + L-glutamate + ADP + phosphate + 2 H(+)</text>
        <dbReference type="Rhea" id="RHEA:14513"/>
        <dbReference type="Rhea" id="RHEA-COMP:9674"/>
        <dbReference type="Rhea" id="RHEA-COMP:9677"/>
        <dbReference type="ChEBI" id="CHEBI:15377"/>
        <dbReference type="ChEBI" id="CHEBI:15378"/>
        <dbReference type="ChEBI" id="CHEBI:29985"/>
        <dbReference type="ChEBI" id="CHEBI:30616"/>
        <dbReference type="ChEBI" id="CHEBI:43474"/>
        <dbReference type="ChEBI" id="CHEBI:58359"/>
        <dbReference type="ChEBI" id="CHEBI:78515"/>
        <dbReference type="ChEBI" id="CHEBI:78516"/>
        <dbReference type="ChEBI" id="CHEBI:456216"/>
    </reaction>
</comment>
<comment type="subunit">
    <text evidence="1">Heterotrimer of A, B and C subunits.</text>
</comment>
<comment type="similarity">
    <text evidence="1">Belongs to the GatB/GatE family. GatB subfamily.</text>
</comment>
<accession>Q2GKN0</accession>
<keyword id="KW-0067">ATP-binding</keyword>
<keyword id="KW-0436">Ligase</keyword>
<keyword id="KW-0547">Nucleotide-binding</keyword>
<keyword id="KW-0648">Protein biosynthesis</keyword>
<proteinExistence type="inferred from homology"/>
<dbReference type="EC" id="6.3.5.-" evidence="1"/>
<dbReference type="EMBL" id="CP000235">
    <property type="protein sequence ID" value="ABD43455.1"/>
    <property type="molecule type" value="Genomic_DNA"/>
</dbReference>
<dbReference type="RefSeq" id="WP_011450594.1">
    <property type="nucleotide sequence ID" value="NC_007797.1"/>
</dbReference>
<dbReference type="SMR" id="Q2GKN0"/>
<dbReference type="STRING" id="212042.APH_0470"/>
<dbReference type="PaxDb" id="212042-APH_0470"/>
<dbReference type="EnsemblBacteria" id="ABD43455">
    <property type="protein sequence ID" value="ABD43455"/>
    <property type="gene ID" value="APH_0470"/>
</dbReference>
<dbReference type="GeneID" id="92747363"/>
<dbReference type="KEGG" id="aph:APH_0470"/>
<dbReference type="eggNOG" id="COG0064">
    <property type="taxonomic scope" value="Bacteria"/>
</dbReference>
<dbReference type="HOGENOM" id="CLU_019240_0_0_5"/>
<dbReference type="Proteomes" id="UP000001943">
    <property type="component" value="Chromosome"/>
</dbReference>
<dbReference type="GO" id="GO:0050566">
    <property type="term" value="F:asparaginyl-tRNA synthase (glutamine-hydrolyzing) activity"/>
    <property type="evidence" value="ECO:0007669"/>
    <property type="project" value="RHEA"/>
</dbReference>
<dbReference type="GO" id="GO:0005524">
    <property type="term" value="F:ATP binding"/>
    <property type="evidence" value="ECO:0007669"/>
    <property type="project" value="UniProtKB-KW"/>
</dbReference>
<dbReference type="GO" id="GO:0050567">
    <property type="term" value="F:glutaminyl-tRNA synthase (glutamine-hydrolyzing) activity"/>
    <property type="evidence" value="ECO:0007669"/>
    <property type="project" value="UniProtKB-UniRule"/>
</dbReference>
<dbReference type="GO" id="GO:0070681">
    <property type="term" value="P:glutaminyl-tRNAGln biosynthesis via transamidation"/>
    <property type="evidence" value="ECO:0007669"/>
    <property type="project" value="TreeGrafter"/>
</dbReference>
<dbReference type="GO" id="GO:0006412">
    <property type="term" value="P:translation"/>
    <property type="evidence" value="ECO:0007669"/>
    <property type="project" value="UniProtKB-UniRule"/>
</dbReference>
<dbReference type="FunFam" id="1.10.10.410:FF:000001">
    <property type="entry name" value="Aspartyl/glutamyl-tRNA(Asn/Gln) amidotransferase subunit B"/>
    <property type="match status" value="1"/>
</dbReference>
<dbReference type="Gene3D" id="1.10.10.410">
    <property type="match status" value="1"/>
</dbReference>
<dbReference type="Gene3D" id="1.10.150.380">
    <property type="entry name" value="GatB domain, N-terminal subdomain"/>
    <property type="match status" value="1"/>
</dbReference>
<dbReference type="HAMAP" id="MF_00121">
    <property type="entry name" value="GatB"/>
    <property type="match status" value="1"/>
</dbReference>
<dbReference type="InterPro" id="IPR017959">
    <property type="entry name" value="Asn/Gln-tRNA_amidoTrfase_suB/E"/>
</dbReference>
<dbReference type="InterPro" id="IPR006075">
    <property type="entry name" value="Asn/Gln-tRNA_Trfase_suB/E_cat"/>
</dbReference>
<dbReference type="InterPro" id="IPR018027">
    <property type="entry name" value="Asn/Gln_amidotransferase"/>
</dbReference>
<dbReference type="InterPro" id="IPR003789">
    <property type="entry name" value="Asn/Gln_tRNA_amidoTrase-B-like"/>
</dbReference>
<dbReference type="InterPro" id="IPR004413">
    <property type="entry name" value="GatB"/>
</dbReference>
<dbReference type="InterPro" id="IPR042114">
    <property type="entry name" value="GatB_C_1"/>
</dbReference>
<dbReference type="InterPro" id="IPR023168">
    <property type="entry name" value="GatB_Yqey_C_2"/>
</dbReference>
<dbReference type="InterPro" id="IPR017958">
    <property type="entry name" value="Gln-tRNA_amidoTrfase_suB_CS"/>
</dbReference>
<dbReference type="InterPro" id="IPR014746">
    <property type="entry name" value="Gln_synth/guanido_kin_cat_dom"/>
</dbReference>
<dbReference type="NCBIfam" id="TIGR00133">
    <property type="entry name" value="gatB"/>
    <property type="match status" value="1"/>
</dbReference>
<dbReference type="NCBIfam" id="NF004012">
    <property type="entry name" value="PRK05477.1-2"/>
    <property type="match status" value="1"/>
</dbReference>
<dbReference type="NCBIfam" id="NF004014">
    <property type="entry name" value="PRK05477.1-4"/>
    <property type="match status" value="1"/>
</dbReference>
<dbReference type="NCBIfam" id="NF004015">
    <property type="entry name" value="PRK05477.1-5"/>
    <property type="match status" value="1"/>
</dbReference>
<dbReference type="PANTHER" id="PTHR11659">
    <property type="entry name" value="GLUTAMYL-TRNA GLN AMIDOTRANSFERASE SUBUNIT B MITOCHONDRIAL AND PROKARYOTIC PET112-RELATED"/>
    <property type="match status" value="1"/>
</dbReference>
<dbReference type="PANTHER" id="PTHR11659:SF0">
    <property type="entry name" value="GLUTAMYL-TRNA(GLN) AMIDOTRANSFERASE SUBUNIT B, MITOCHONDRIAL"/>
    <property type="match status" value="1"/>
</dbReference>
<dbReference type="Pfam" id="PF02934">
    <property type="entry name" value="GatB_N"/>
    <property type="match status" value="1"/>
</dbReference>
<dbReference type="Pfam" id="PF02637">
    <property type="entry name" value="GatB_Yqey"/>
    <property type="match status" value="1"/>
</dbReference>
<dbReference type="SMART" id="SM00845">
    <property type="entry name" value="GatB_Yqey"/>
    <property type="match status" value="1"/>
</dbReference>
<dbReference type="SUPFAM" id="SSF89095">
    <property type="entry name" value="GatB/YqeY motif"/>
    <property type="match status" value="1"/>
</dbReference>
<dbReference type="SUPFAM" id="SSF55931">
    <property type="entry name" value="Glutamine synthetase/guanido kinase"/>
    <property type="match status" value="1"/>
</dbReference>
<dbReference type="PROSITE" id="PS01234">
    <property type="entry name" value="GATB"/>
    <property type="match status" value="1"/>
</dbReference>